<feature type="chain" id="PRO_0000372661" description="DNA repair protein Rad60">
    <location>
        <begin position="1"/>
        <end position="424"/>
    </location>
</feature>
<feature type="region of interest" description="Disordered" evidence="1">
    <location>
        <begin position="45"/>
        <end position="177"/>
    </location>
</feature>
<feature type="compositionally biased region" description="Basic residues" evidence="1">
    <location>
        <begin position="48"/>
        <end position="57"/>
    </location>
</feature>
<feature type="compositionally biased region" description="Basic and acidic residues" evidence="1">
    <location>
        <begin position="77"/>
        <end position="93"/>
    </location>
</feature>
<feature type="compositionally biased region" description="Basic and acidic residues" evidence="1">
    <location>
        <begin position="104"/>
        <end position="123"/>
    </location>
</feature>
<feature type="compositionally biased region" description="Basic residues" evidence="1">
    <location>
        <begin position="156"/>
        <end position="166"/>
    </location>
</feature>
<feature type="compositionally biased region" description="Low complexity" evidence="1">
    <location>
        <begin position="167"/>
        <end position="177"/>
    </location>
</feature>
<feature type="modified residue" description="Phosphotyrosine" evidence="3">
    <location>
        <position position="26"/>
    </location>
</feature>
<feature type="modified residue" description="Phosphoserine" evidence="3">
    <location>
        <position position="32"/>
    </location>
</feature>
<feature type="modified residue" description="Phosphoserine" evidence="3">
    <location>
        <position position="34"/>
    </location>
</feature>
<feature type="modified residue" description="Phosphoserine" evidence="2">
    <location>
        <position position="96"/>
    </location>
</feature>
<feature type="splice variant" id="VSP_037650" description="In isoform B." evidence="5">
    <location>
        <begin position="186"/>
        <end position="187"/>
    </location>
</feature>
<evidence type="ECO:0000256" key="1">
    <source>
        <dbReference type="SAM" id="MobiDB-lite"/>
    </source>
</evidence>
<evidence type="ECO:0000269" key="2">
    <source>
    </source>
</evidence>
<evidence type="ECO:0000269" key="3">
    <source>
    </source>
</evidence>
<evidence type="ECO:0000269" key="4">
    <source>
    </source>
</evidence>
<evidence type="ECO:0000303" key="5">
    <source>
    </source>
</evidence>
<evidence type="ECO:0000303" key="6">
    <source>
    </source>
</evidence>
<evidence type="ECO:0000312" key="7">
    <source>
        <dbReference type="FlyBase" id="FBgn0039065"/>
    </source>
</evidence>
<organism>
    <name type="scientific">Drosophila melanogaster</name>
    <name type="common">Fruit fly</name>
    <dbReference type="NCBI Taxonomy" id="7227"/>
    <lineage>
        <taxon>Eukaryota</taxon>
        <taxon>Metazoa</taxon>
        <taxon>Ecdysozoa</taxon>
        <taxon>Arthropoda</taxon>
        <taxon>Hexapoda</taxon>
        <taxon>Insecta</taxon>
        <taxon>Pterygota</taxon>
        <taxon>Neoptera</taxon>
        <taxon>Endopterygota</taxon>
        <taxon>Diptera</taxon>
        <taxon>Brachycera</taxon>
        <taxon>Muscomorpha</taxon>
        <taxon>Ephydroidea</taxon>
        <taxon>Drosophilidae</taxon>
        <taxon>Drosophila</taxon>
        <taxon>Sophophora</taxon>
    </lineage>
</organism>
<name>RAD60_DROME</name>
<gene>
    <name evidence="6 7" type="primary">Rad60</name>
    <name evidence="6" type="synonym">RENi</name>
    <name evidence="7" type="ORF">CG4449</name>
</gene>
<sequence length="424" mass="47744">MSDDDCDIFSAARKRIPEIALPKNPYNLGNDSFSKEVDYDFIEDLPKKSTKTGKRKNPAATRKNPPKSQDDASPPKQAEHKAVEPEEDMRTERSLSPVSLLILEMEKKNGQQSDVEKHAKENDVGPVARRTRSSLNRSEMAPPPVSPTVEVPTQTKPKKRGQKKRTSLTTTTSNSASMEVSLPSIVGQNNEHISRRWTLAEVAARSKVVDSIDLVSAVAPRVEGFVNLDSEDEGEKEAPPVVEEENIFDNDNPTIEVALSWLGEIQIYKLRQHQKFKHLFKELASRNGIDENDITVDMYYNFVGPEDTPHSIGLKSFHTLTGHPTKSHNNNNVAAKIDYNPEALCRKPKKFQVKVQADKWKHPLVIPMKKTDNFKIIFIKCAEELNCDPRTIKLFFDGDLLDPNDTPNNQDMEGNEVIDLKIKA</sequence>
<keyword id="KW-0025">Alternative splicing</keyword>
<keyword id="KW-0539">Nucleus</keyword>
<keyword id="KW-0597">Phosphoprotein</keyword>
<keyword id="KW-1185">Reference proteome</keyword>
<reference key="1">
    <citation type="journal article" date="2000" name="Science">
        <title>The genome sequence of Drosophila melanogaster.</title>
        <authorList>
            <person name="Adams M.D."/>
            <person name="Celniker S.E."/>
            <person name="Holt R.A."/>
            <person name="Evans C.A."/>
            <person name="Gocayne J.D."/>
            <person name="Amanatides P.G."/>
            <person name="Scherer S.E."/>
            <person name="Li P.W."/>
            <person name="Hoskins R.A."/>
            <person name="Galle R.F."/>
            <person name="George R.A."/>
            <person name="Lewis S.E."/>
            <person name="Richards S."/>
            <person name="Ashburner M."/>
            <person name="Henderson S.N."/>
            <person name="Sutton G.G."/>
            <person name="Wortman J.R."/>
            <person name="Yandell M.D."/>
            <person name="Zhang Q."/>
            <person name="Chen L.X."/>
            <person name="Brandon R.C."/>
            <person name="Rogers Y.-H.C."/>
            <person name="Blazej R.G."/>
            <person name="Champe M."/>
            <person name="Pfeiffer B.D."/>
            <person name="Wan K.H."/>
            <person name="Doyle C."/>
            <person name="Baxter E.G."/>
            <person name="Helt G."/>
            <person name="Nelson C.R."/>
            <person name="Miklos G.L.G."/>
            <person name="Abril J.F."/>
            <person name="Agbayani A."/>
            <person name="An H.-J."/>
            <person name="Andrews-Pfannkoch C."/>
            <person name="Baldwin D."/>
            <person name="Ballew R.M."/>
            <person name="Basu A."/>
            <person name="Baxendale J."/>
            <person name="Bayraktaroglu L."/>
            <person name="Beasley E.M."/>
            <person name="Beeson K.Y."/>
            <person name="Benos P.V."/>
            <person name="Berman B.P."/>
            <person name="Bhandari D."/>
            <person name="Bolshakov S."/>
            <person name="Borkova D."/>
            <person name="Botchan M.R."/>
            <person name="Bouck J."/>
            <person name="Brokstein P."/>
            <person name="Brottier P."/>
            <person name="Burtis K.C."/>
            <person name="Busam D.A."/>
            <person name="Butler H."/>
            <person name="Cadieu E."/>
            <person name="Center A."/>
            <person name="Chandra I."/>
            <person name="Cherry J.M."/>
            <person name="Cawley S."/>
            <person name="Dahlke C."/>
            <person name="Davenport L.B."/>
            <person name="Davies P."/>
            <person name="de Pablos B."/>
            <person name="Delcher A."/>
            <person name="Deng Z."/>
            <person name="Mays A.D."/>
            <person name="Dew I."/>
            <person name="Dietz S.M."/>
            <person name="Dodson K."/>
            <person name="Doup L.E."/>
            <person name="Downes M."/>
            <person name="Dugan-Rocha S."/>
            <person name="Dunkov B.C."/>
            <person name="Dunn P."/>
            <person name="Durbin K.J."/>
            <person name="Evangelista C.C."/>
            <person name="Ferraz C."/>
            <person name="Ferriera S."/>
            <person name="Fleischmann W."/>
            <person name="Fosler C."/>
            <person name="Gabrielian A.E."/>
            <person name="Garg N.S."/>
            <person name="Gelbart W.M."/>
            <person name="Glasser K."/>
            <person name="Glodek A."/>
            <person name="Gong F."/>
            <person name="Gorrell J.H."/>
            <person name="Gu Z."/>
            <person name="Guan P."/>
            <person name="Harris M."/>
            <person name="Harris N.L."/>
            <person name="Harvey D.A."/>
            <person name="Heiman T.J."/>
            <person name="Hernandez J.R."/>
            <person name="Houck J."/>
            <person name="Hostin D."/>
            <person name="Houston K.A."/>
            <person name="Howland T.J."/>
            <person name="Wei M.-H."/>
            <person name="Ibegwam C."/>
            <person name="Jalali M."/>
            <person name="Kalush F."/>
            <person name="Karpen G.H."/>
            <person name="Ke Z."/>
            <person name="Kennison J.A."/>
            <person name="Ketchum K.A."/>
            <person name="Kimmel B.E."/>
            <person name="Kodira C.D."/>
            <person name="Kraft C.L."/>
            <person name="Kravitz S."/>
            <person name="Kulp D."/>
            <person name="Lai Z."/>
            <person name="Lasko P."/>
            <person name="Lei Y."/>
            <person name="Levitsky A.A."/>
            <person name="Li J.H."/>
            <person name="Li Z."/>
            <person name="Liang Y."/>
            <person name="Lin X."/>
            <person name="Liu X."/>
            <person name="Mattei B."/>
            <person name="McIntosh T.C."/>
            <person name="McLeod M.P."/>
            <person name="McPherson D."/>
            <person name="Merkulov G."/>
            <person name="Milshina N.V."/>
            <person name="Mobarry C."/>
            <person name="Morris J."/>
            <person name="Moshrefi A."/>
            <person name="Mount S.M."/>
            <person name="Moy M."/>
            <person name="Murphy B."/>
            <person name="Murphy L."/>
            <person name="Muzny D.M."/>
            <person name="Nelson D.L."/>
            <person name="Nelson D.R."/>
            <person name="Nelson K.A."/>
            <person name="Nixon K."/>
            <person name="Nusskern D.R."/>
            <person name="Pacleb J.M."/>
            <person name="Palazzolo M."/>
            <person name="Pittman G.S."/>
            <person name="Pan S."/>
            <person name="Pollard J."/>
            <person name="Puri V."/>
            <person name="Reese M.G."/>
            <person name="Reinert K."/>
            <person name="Remington K."/>
            <person name="Saunders R.D.C."/>
            <person name="Scheeler F."/>
            <person name="Shen H."/>
            <person name="Shue B.C."/>
            <person name="Siden-Kiamos I."/>
            <person name="Simpson M."/>
            <person name="Skupski M.P."/>
            <person name="Smith T.J."/>
            <person name="Spier E."/>
            <person name="Spradling A.C."/>
            <person name="Stapleton M."/>
            <person name="Strong R."/>
            <person name="Sun E."/>
            <person name="Svirskas R."/>
            <person name="Tector C."/>
            <person name="Turner R."/>
            <person name="Venter E."/>
            <person name="Wang A.H."/>
            <person name="Wang X."/>
            <person name="Wang Z.-Y."/>
            <person name="Wassarman D.A."/>
            <person name="Weinstock G.M."/>
            <person name="Weissenbach J."/>
            <person name="Williams S.M."/>
            <person name="Woodage T."/>
            <person name="Worley K.C."/>
            <person name="Wu D."/>
            <person name="Yang S."/>
            <person name="Yao Q.A."/>
            <person name="Ye J."/>
            <person name="Yeh R.-F."/>
            <person name="Zaveri J.S."/>
            <person name="Zhan M."/>
            <person name="Zhang G."/>
            <person name="Zhao Q."/>
            <person name="Zheng L."/>
            <person name="Zheng X.H."/>
            <person name="Zhong F.N."/>
            <person name="Zhong W."/>
            <person name="Zhou X."/>
            <person name="Zhu S.C."/>
            <person name="Zhu X."/>
            <person name="Smith H.O."/>
            <person name="Gibbs R.A."/>
            <person name="Myers E.W."/>
            <person name="Rubin G.M."/>
            <person name="Venter J.C."/>
        </authorList>
    </citation>
    <scope>NUCLEOTIDE SEQUENCE [LARGE SCALE GENOMIC DNA]</scope>
    <source>
        <strain>Berkeley</strain>
    </source>
</reference>
<reference key="2">
    <citation type="journal article" date="2002" name="Genome Biol.">
        <title>Annotation of the Drosophila melanogaster euchromatic genome: a systematic review.</title>
        <authorList>
            <person name="Misra S."/>
            <person name="Crosby M.A."/>
            <person name="Mungall C.J."/>
            <person name="Matthews B.B."/>
            <person name="Campbell K.S."/>
            <person name="Hradecky P."/>
            <person name="Huang Y."/>
            <person name="Kaminker J.S."/>
            <person name="Millburn G.H."/>
            <person name="Prochnik S.E."/>
            <person name="Smith C.D."/>
            <person name="Tupy J.L."/>
            <person name="Whitfield E.J."/>
            <person name="Bayraktaroglu L."/>
            <person name="Berman B.P."/>
            <person name="Bettencourt B.R."/>
            <person name="Celniker S.E."/>
            <person name="de Grey A.D.N.J."/>
            <person name="Drysdale R.A."/>
            <person name="Harris N.L."/>
            <person name="Richter J."/>
            <person name="Russo S."/>
            <person name="Schroeder A.J."/>
            <person name="Shu S.Q."/>
            <person name="Stapleton M."/>
            <person name="Yamada C."/>
            <person name="Ashburner M."/>
            <person name="Gelbart W.M."/>
            <person name="Rubin G.M."/>
            <person name="Lewis S.E."/>
        </authorList>
    </citation>
    <scope>GENOME REANNOTATION</scope>
    <source>
        <strain>Berkeley</strain>
    </source>
</reference>
<reference key="3">
    <citation type="journal article" date="2002" name="Genome Biol.">
        <title>A Drosophila full-length cDNA resource.</title>
        <authorList>
            <person name="Stapleton M."/>
            <person name="Carlson J.W."/>
            <person name="Brokstein P."/>
            <person name="Yu C."/>
            <person name="Champe M."/>
            <person name="George R.A."/>
            <person name="Guarin H."/>
            <person name="Kronmiller B."/>
            <person name="Pacleb J.M."/>
            <person name="Park S."/>
            <person name="Wan K.H."/>
            <person name="Rubin G.M."/>
            <person name="Celniker S.E."/>
        </authorList>
    </citation>
    <scope>NUCLEOTIDE SEQUENCE [LARGE SCALE MRNA] (ISOFORM B)</scope>
    <source>
        <strain>Berkeley</strain>
        <tissue>Embryo</tissue>
    </source>
</reference>
<reference key="4">
    <citation type="journal article" date="2007" name="Mol. Biosyst.">
        <title>An integrated chemical, mass spectrometric and computational strategy for (quantitative) phosphoproteomics: application to Drosophila melanogaster Kc167 cells.</title>
        <authorList>
            <person name="Bodenmiller B."/>
            <person name="Mueller L.N."/>
            <person name="Pedrioli P.G.A."/>
            <person name="Pflieger D."/>
            <person name="Juenger M.A."/>
            <person name="Eng J.K."/>
            <person name="Aebersold R."/>
            <person name="Tao W.A."/>
        </authorList>
    </citation>
    <scope>PHOSPHORYLATION [LARGE SCALE ANALYSIS] AT SER-96</scope>
    <scope>IDENTIFICATION BY MASS SPECTROMETRY</scope>
</reference>
<reference key="5">
    <citation type="journal article" date="2008" name="J. Proteome Res.">
        <title>Phosphoproteome analysis of Drosophila melanogaster embryos.</title>
        <authorList>
            <person name="Zhai B."/>
            <person name="Villen J."/>
            <person name="Beausoleil S.A."/>
            <person name="Mintseris J."/>
            <person name="Gygi S.P."/>
        </authorList>
    </citation>
    <scope>PHOSPHORYLATION [LARGE SCALE ANALYSIS] AT TYR-26; SER-32 AND SER-34</scope>
    <scope>IDENTIFICATION BY MASS SPECTROMETRY</scope>
    <source>
        <tissue>Embryo</tissue>
    </source>
</reference>
<reference key="6">
    <citation type="journal article" date="2015" name="Nat. Cell Biol.">
        <title>Heterochromatic breaks move to the nuclear periphery to continue recombinational repair.</title>
        <authorList>
            <person name="Ryu T."/>
            <person name="Spatola B."/>
            <person name="Delabaere L."/>
            <person name="Bowlin K."/>
            <person name="Hopp H."/>
            <person name="Kunitake R."/>
            <person name="Karpen G.H."/>
            <person name="Chiolo I."/>
        </authorList>
    </citation>
    <scope>FUNCTION</scope>
    <scope>INTERACTION WITH DGRN; SMC5 AND JNJ</scope>
    <scope>SUBCELLULAR LOCATION</scope>
    <scope>DISRUPTION PHENOTYPE</scope>
</reference>
<comment type="function">
    <text evidence="4">Required for repair of DNA double strand breaks which occur during replication or are induced by ionizing radiation (IR) (PubMed:26502056). Functions with dgrn and downstream of the SMC5-SMC6 complex to regulate strand break repair (PubMed:26502056). Likely functions by stabilizing the association of heterochromatic double strand breaks (DSBs) with the nuclear periphery as part of the homologous recombination (HR) repair process (PubMed:26502056).</text>
</comment>
<comment type="subunit">
    <text evidence="4">Forms a complex with dgrn; likely required for localization to the nuclear periphery (PubMed:26502056). Interacts with the SMC5-SMC6 complex members SMC5 and SMC6/jnj following ionizing radiation (IR) to induce DNA damage (PubMed:26502056). Interaction between the SMC5-SMC6 complex and the dgrn-Rad60 complex, may stabilize the association of heterochromatic DSBs with the nuclear periphery (PubMed:26502056).</text>
</comment>
<comment type="subcellular location">
    <subcellularLocation>
        <location evidence="4">Nucleus</location>
    </subcellularLocation>
    <subcellularLocation>
        <location evidence="4">Nucleus</location>
        <location evidence="4">Nucleoplasm</location>
    </subcellularLocation>
    <text evidence="4">Associates with the nuclear pores and localizes to the nuclear periphery.</text>
</comment>
<comment type="alternative products">
    <event type="alternative splicing"/>
    <isoform>
        <id>Q9VCP1-1</id>
        <name>A</name>
        <sequence type="displayed"/>
    </isoform>
    <isoform>
        <id>Q9VCP1-2</id>
        <name>B</name>
        <sequence type="described" ref="VSP_037650"/>
    </isoform>
</comment>
<comment type="disruption phenotype">
    <text evidence="4">Larval neuroblasts exhibit significant genome instability, including increased aneuploidy, chromosome fusions and satellite repeats.</text>
</comment>
<dbReference type="EMBL" id="AE014297">
    <property type="protein sequence ID" value="AAF56116.2"/>
    <property type="molecule type" value="Genomic_DNA"/>
</dbReference>
<dbReference type="EMBL" id="AY118950">
    <property type="protein sequence ID" value="AAM50810.1"/>
    <property type="molecule type" value="mRNA"/>
</dbReference>
<dbReference type="RefSeq" id="NP_001163698.1">
    <molecule id="Q9VCP1-2"/>
    <property type="nucleotide sequence ID" value="NM_001170227.1"/>
</dbReference>
<dbReference type="RefSeq" id="NP_001262866.1">
    <molecule id="Q9VCP1-2"/>
    <property type="nucleotide sequence ID" value="NM_001275937.1"/>
</dbReference>
<dbReference type="RefSeq" id="NP_001262867.1">
    <molecule id="Q9VCP1-1"/>
    <property type="nucleotide sequence ID" value="NM_001275938.1"/>
</dbReference>
<dbReference type="RefSeq" id="NP_651134.1">
    <molecule id="Q9VCP1-1"/>
    <property type="nucleotide sequence ID" value="NM_142877.1"/>
</dbReference>
<dbReference type="SMR" id="Q9VCP1"/>
<dbReference type="BioGRID" id="67691">
    <property type="interactions" value="3"/>
</dbReference>
<dbReference type="FunCoup" id="Q9VCP1">
    <property type="interactions" value="101"/>
</dbReference>
<dbReference type="IntAct" id="Q9VCP1">
    <property type="interactions" value="1"/>
</dbReference>
<dbReference type="STRING" id="7227.FBpp0083780"/>
<dbReference type="GlyGen" id="Q9VCP1">
    <property type="glycosylation" value="1 site"/>
</dbReference>
<dbReference type="iPTMnet" id="Q9VCP1"/>
<dbReference type="PaxDb" id="7227-FBpp0083780"/>
<dbReference type="DNASU" id="42748"/>
<dbReference type="EnsemblMetazoa" id="FBtr0084388">
    <molecule id="Q9VCP1-1"/>
    <property type="protein sequence ID" value="FBpp0083780"/>
    <property type="gene ID" value="FBgn0039065"/>
</dbReference>
<dbReference type="EnsemblMetazoa" id="FBtr0301088">
    <molecule id="Q9VCP1-2"/>
    <property type="protein sequence ID" value="FBpp0290310"/>
    <property type="gene ID" value="FBgn0039065"/>
</dbReference>
<dbReference type="EnsemblMetazoa" id="FBtr0334499">
    <molecule id="Q9VCP1-2"/>
    <property type="protein sequence ID" value="FBpp0306566"/>
    <property type="gene ID" value="FBgn0039065"/>
</dbReference>
<dbReference type="EnsemblMetazoa" id="FBtr0334500">
    <molecule id="Q9VCP1-1"/>
    <property type="protein sequence ID" value="FBpp0306567"/>
    <property type="gene ID" value="FBgn0039065"/>
</dbReference>
<dbReference type="GeneID" id="42748"/>
<dbReference type="KEGG" id="dme:Dmel_CG4449"/>
<dbReference type="UCSC" id="CG4449-RA">
    <molecule id="Q9VCP1-1"/>
    <property type="organism name" value="d. melanogaster"/>
</dbReference>
<dbReference type="AGR" id="FB:FBgn0039065"/>
<dbReference type="CTD" id="42748"/>
<dbReference type="FlyBase" id="FBgn0039065">
    <property type="gene designation" value="Rad60"/>
</dbReference>
<dbReference type="VEuPathDB" id="VectorBase:FBgn0039065"/>
<dbReference type="eggNOG" id="KOG1769">
    <property type="taxonomic scope" value="Eukaryota"/>
</dbReference>
<dbReference type="InParanoid" id="Q9VCP1"/>
<dbReference type="OMA" id="AHMFKEV"/>
<dbReference type="OrthoDB" id="442921at2759"/>
<dbReference type="PhylomeDB" id="Q9VCP1"/>
<dbReference type="BioGRID-ORCS" id="42748">
    <property type="hits" value="0 hits in 1 CRISPR screen"/>
</dbReference>
<dbReference type="GenomeRNAi" id="42748"/>
<dbReference type="PRO" id="PR:Q9VCP1"/>
<dbReference type="Proteomes" id="UP000000803">
    <property type="component" value="Chromosome 3R"/>
</dbReference>
<dbReference type="Bgee" id="FBgn0039065">
    <property type="expression patterns" value="Expressed in secondary oocyte and 88 other cell types or tissues"/>
</dbReference>
<dbReference type="ExpressionAtlas" id="Q9VCP1">
    <property type="expression patterns" value="baseline and differential"/>
</dbReference>
<dbReference type="GO" id="GO:0034399">
    <property type="term" value="C:nuclear periphery"/>
    <property type="evidence" value="ECO:0000314"/>
    <property type="project" value="FlyBase"/>
</dbReference>
<dbReference type="GO" id="GO:0005654">
    <property type="term" value="C:nucleoplasm"/>
    <property type="evidence" value="ECO:0007669"/>
    <property type="project" value="UniProtKB-SubCell"/>
</dbReference>
<dbReference type="GO" id="GO:0000724">
    <property type="term" value="P:double-strand break repair via homologous recombination"/>
    <property type="evidence" value="ECO:0000315"/>
    <property type="project" value="FlyBase"/>
</dbReference>
<dbReference type="CDD" id="cd01763">
    <property type="entry name" value="Ubl_SUMO_like"/>
    <property type="match status" value="1"/>
</dbReference>
<dbReference type="Gene3D" id="3.10.20.90">
    <property type="entry name" value="Phosphatidylinositol 3-kinase Catalytic Subunit, Chain A, domain 1"/>
    <property type="match status" value="2"/>
</dbReference>
<dbReference type="InterPro" id="IPR052324">
    <property type="entry name" value="NFATC2-Int_DNA_Repair"/>
</dbReference>
<dbReference type="InterPro" id="IPR022617">
    <property type="entry name" value="Rad60/SUMO-like_dom"/>
</dbReference>
<dbReference type="InterPro" id="IPR029071">
    <property type="entry name" value="Ubiquitin-like_domsf"/>
</dbReference>
<dbReference type="PANTHER" id="PTHR47187">
    <property type="entry name" value="NFATC2-INTERACTING PROTEIN"/>
    <property type="match status" value="1"/>
</dbReference>
<dbReference type="PANTHER" id="PTHR47187:SF1">
    <property type="entry name" value="NFATC2-INTERACTING PROTEIN"/>
    <property type="match status" value="1"/>
</dbReference>
<dbReference type="Pfam" id="PF11976">
    <property type="entry name" value="Rad60-SLD"/>
    <property type="match status" value="1"/>
</dbReference>
<dbReference type="SUPFAM" id="SSF54236">
    <property type="entry name" value="Ubiquitin-like"/>
    <property type="match status" value="1"/>
</dbReference>
<accession>Q9VCP1</accession>
<accession>Q8MSB4</accession>
<protein>
    <recommendedName>
        <fullName evidence="6">DNA repair protein Rad60</fullName>
    </recommendedName>
</protein>
<proteinExistence type="evidence at protein level"/>